<proteinExistence type="inferred from homology"/>
<protein>
    <recommendedName>
        <fullName evidence="1">Ribonucleoside-diphosphate reductase small subunit</fullName>
        <ecNumber evidence="1">1.17.4.1</ecNumber>
    </recommendedName>
    <alternativeName>
        <fullName evidence="1">Ribonucleotide reductase small subunit</fullName>
    </alternativeName>
</protein>
<organismHost>
    <name type="scientific">Equus caballus</name>
    <name type="common">Horse</name>
    <dbReference type="NCBI Taxonomy" id="9796"/>
</organismHost>
<accession>Q66662</accession>
<feature type="chain" id="PRO_0000405980" description="Ribonucleoside-diphosphate reductase small subunit">
    <location>
        <begin position="1"/>
        <end position="305"/>
    </location>
</feature>
<feature type="transmembrane region" description="Helical" evidence="1">
    <location>
        <begin position="150"/>
        <end position="170"/>
    </location>
</feature>
<feature type="active site" evidence="1">
    <location>
        <position position="101"/>
    </location>
</feature>
<feature type="binding site" evidence="1">
    <location>
        <position position="64"/>
    </location>
    <ligand>
        <name>Fe cation</name>
        <dbReference type="ChEBI" id="CHEBI:24875"/>
        <label>1</label>
    </ligand>
</feature>
<feature type="binding site" evidence="1">
    <location>
        <position position="94"/>
    </location>
    <ligand>
        <name>Fe cation</name>
        <dbReference type="ChEBI" id="CHEBI:24875"/>
        <label>1</label>
    </ligand>
</feature>
<feature type="binding site" evidence="1">
    <location>
        <position position="94"/>
    </location>
    <ligand>
        <name>Fe cation</name>
        <dbReference type="ChEBI" id="CHEBI:24875"/>
        <label>2</label>
    </ligand>
</feature>
<feature type="binding site" evidence="1">
    <location>
        <position position="97"/>
    </location>
    <ligand>
        <name>Fe cation</name>
        <dbReference type="ChEBI" id="CHEBI:24875"/>
        <label>1</label>
    </ligand>
</feature>
<feature type="binding site" evidence="1">
    <location>
        <position position="157"/>
    </location>
    <ligand>
        <name>Fe cation</name>
        <dbReference type="ChEBI" id="CHEBI:24875"/>
        <label>2</label>
    </ligand>
</feature>
<feature type="binding site" evidence="1">
    <location>
        <position position="191"/>
    </location>
    <ligand>
        <name>Fe cation</name>
        <dbReference type="ChEBI" id="CHEBI:24875"/>
        <label>2</label>
    </ligand>
</feature>
<feature type="binding site" evidence="1">
    <location>
        <position position="194"/>
    </location>
    <ligand>
        <name>Fe cation</name>
        <dbReference type="ChEBI" id="CHEBI:24875"/>
        <label>2</label>
    </ligand>
</feature>
<reference key="1">
    <citation type="journal article" date="1995" name="J. Mol. Biol.">
        <title>The DNA sequence of equine herpesvirus 2.</title>
        <authorList>
            <person name="Telford E.A.R."/>
            <person name="Watson M.S."/>
            <person name="Aird H.C."/>
            <person name="Perry J."/>
            <person name="Davison A.J."/>
        </authorList>
    </citation>
    <scope>NUCLEOTIDE SEQUENCE [LARGE SCALE GENOMIC DNA]</scope>
</reference>
<name>RIR2_EHV2</name>
<evidence type="ECO:0000255" key="1">
    <source>
        <dbReference type="HAMAP-Rule" id="MF_04028"/>
    </source>
</evidence>
<keyword id="KW-0235">DNA replication</keyword>
<keyword id="KW-1043">Host membrane</keyword>
<keyword id="KW-0408">Iron</keyword>
<keyword id="KW-0472">Membrane</keyword>
<keyword id="KW-0479">Metal-binding</keyword>
<keyword id="KW-0560">Oxidoreductase</keyword>
<keyword id="KW-1185">Reference proteome</keyword>
<keyword id="KW-0812">Transmembrane</keyword>
<keyword id="KW-1133">Transmembrane helix</keyword>
<sequence>MDFVKQFLYSCDHMGFLALTQETWQNRWFPSQISLTSDVACLQSLNPRDLEFYKFLFSFLAMAEKLVNFNIQALVADFHSHDLEHYYTEQEAMENIHGKVYANILNMFFKNNVGEMQKYAREIVGDEALAAKLHWLHGRVSEAKTRAEKVLVFLLIEGIFFISSFYSIATLRVRGLMNGVCMANDYISRDEWVHTRAAALLFNTLVPDEEKPSPEWIGALFREAVEVEYNFILAKGRGVSHVNVADINRFLEATADRILKSINVGPVYGTQPPPNCPLVYTGCLKNVNFFERESSDYTTAVDNDL</sequence>
<comment type="function">
    <text evidence="1">Ribonucleoside-diphosphate reductase holoenzyme provides the precursors necessary for viral DNA synthesis. Allows virus growth in non-dividing cells, as well as reactivation from latency in infected hosts. Catalyzes the biosynthesis of deoxyribonucleotides from the corresponding ribonucleotides.</text>
</comment>
<comment type="catalytic activity">
    <reaction evidence="1">
        <text>a 2'-deoxyribonucleoside 5'-diphosphate + [thioredoxin]-disulfide + H2O = a ribonucleoside 5'-diphosphate + [thioredoxin]-dithiol</text>
        <dbReference type="Rhea" id="RHEA:23252"/>
        <dbReference type="Rhea" id="RHEA-COMP:10698"/>
        <dbReference type="Rhea" id="RHEA-COMP:10700"/>
        <dbReference type="ChEBI" id="CHEBI:15377"/>
        <dbReference type="ChEBI" id="CHEBI:29950"/>
        <dbReference type="ChEBI" id="CHEBI:50058"/>
        <dbReference type="ChEBI" id="CHEBI:57930"/>
        <dbReference type="ChEBI" id="CHEBI:73316"/>
        <dbReference type="EC" id="1.17.4.1"/>
    </reaction>
</comment>
<comment type="cofactor">
    <cofactor evidence="1">
        <name>Fe cation</name>
        <dbReference type="ChEBI" id="CHEBI:24875"/>
    </cofactor>
</comment>
<comment type="subunit">
    <text evidence="1">Heterotetramer composed of a homodimer of the large subunit (R1) and a homodimer of the small subunit (R2). Larger multisubunit protein complex are also active, composed of (R1)n(R2)n.</text>
</comment>
<comment type="subcellular location">
    <subcellularLocation>
        <location evidence="1">Host membrane</location>
        <topology evidence="1">Single-pass membrane protein</topology>
    </subcellularLocation>
</comment>
<comment type="similarity">
    <text evidence="1">Belongs to the ribonucleoside diphosphate reductase small chain family.</text>
</comment>
<dbReference type="EC" id="1.17.4.1" evidence="1"/>
<dbReference type="EMBL" id="U20824">
    <property type="protein sequence ID" value="AAC13848.1"/>
    <property type="molecule type" value="Genomic_DNA"/>
</dbReference>
<dbReference type="PIR" id="S55655">
    <property type="entry name" value="S55655"/>
</dbReference>
<dbReference type="SMR" id="Q66662"/>
<dbReference type="KEGG" id="vg:1461059"/>
<dbReference type="Proteomes" id="UP000007083">
    <property type="component" value="Segment"/>
</dbReference>
<dbReference type="GO" id="GO:0033644">
    <property type="term" value="C:host cell membrane"/>
    <property type="evidence" value="ECO:0007669"/>
    <property type="project" value="UniProtKB-SubCell"/>
</dbReference>
<dbReference type="GO" id="GO:0016020">
    <property type="term" value="C:membrane"/>
    <property type="evidence" value="ECO:0007669"/>
    <property type="project" value="UniProtKB-KW"/>
</dbReference>
<dbReference type="GO" id="GO:0046872">
    <property type="term" value="F:metal ion binding"/>
    <property type="evidence" value="ECO:0007669"/>
    <property type="project" value="UniProtKB-KW"/>
</dbReference>
<dbReference type="GO" id="GO:0004748">
    <property type="term" value="F:ribonucleoside-diphosphate reductase activity, thioredoxin disulfide as acceptor"/>
    <property type="evidence" value="ECO:0007669"/>
    <property type="project" value="UniProtKB-EC"/>
</dbReference>
<dbReference type="GO" id="GO:0009263">
    <property type="term" value="P:deoxyribonucleotide biosynthetic process"/>
    <property type="evidence" value="ECO:0007669"/>
    <property type="project" value="InterPro"/>
</dbReference>
<dbReference type="GO" id="GO:0006260">
    <property type="term" value="P:DNA replication"/>
    <property type="evidence" value="ECO:0007669"/>
    <property type="project" value="UniProtKB-KW"/>
</dbReference>
<dbReference type="CDD" id="cd01049">
    <property type="entry name" value="RNRR2"/>
    <property type="match status" value="1"/>
</dbReference>
<dbReference type="Gene3D" id="1.10.620.20">
    <property type="entry name" value="Ribonucleotide Reductase, subunit A"/>
    <property type="match status" value="1"/>
</dbReference>
<dbReference type="HAMAP" id="MF_04028">
    <property type="entry name" value="HSV_RIR2"/>
    <property type="match status" value="1"/>
</dbReference>
<dbReference type="InterPro" id="IPR009078">
    <property type="entry name" value="Ferritin-like_SF"/>
</dbReference>
<dbReference type="InterPro" id="IPR034715">
    <property type="entry name" value="HSV_RIR2"/>
</dbReference>
<dbReference type="InterPro" id="IPR012348">
    <property type="entry name" value="RNR-like"/>
</dbReference>
<dbReference type="InterPro" id="IPR033909">
    <property type="entry name" value="RNR_small"/>
</dbReference>
<dbReference type="InterPro" id="IPR030475">
    <property type="entry name" value="RNR_small_AS"/>
</dbReference>
<dbReference type="InterPro" id="IPR000358">
    <property type="entry name" value="RNR_small_fam"/>
</dbReference>
<dbReference type="PANTHER" id="PTHR23409">
    <property type="entry name" value="RIBONUCLEOSIDE-DIPHOSPHATE REDUCTASE SMALL CHAIN"/>
    <property type="match status" value="1"/>
</dbReference>
<dbReference type="PANTHER" id="PTHR23409:SF18">
    <property type="entry name" value="RIBONUCLEOSIDE-DIPHOSPHATE REDUCTASE SUBUNIT M2"/>
    <property type="match status" value="1"/>
</dbReference>
<dbReference type="Pfam" id="PF00268">
    <property type="entry name" value="Ribonuc_red_sm"/>
    <property type="match status" value="1"/>
</dbReference>
<dbReference type="SUPFAM" id="SSF47240">
    <property type="entry name" value="Ferritin-like"/>
    <property type="match status" value="1"/>
</dbReference>
<dbReference type="PROSITE" id="PS00368">
    <property type="entry name" value="RIBORED_SMALL"/>
    <property type="match status" value="1"/>
</dbReference>
<gene>
    <name evidence="1" type="primary">RIR2</name>
    <name type="synonym">60</name>
</gene>
<organism>
    <name type="scientific">Equine herpesvirus 2 (strain 86/87)</name>
    <name type="common">EHV-2</name>
    <dbReference type="NCBI Taxonomy" id="82831"/>
    <lineage>
        <taxon>Viruses</taxon>
        <taxon>Duplodnaviria</taxon>
        <taxon>Heunggongvirae</taxon>
        <taxon>Peploviricota</taxon>
        <taxon>Herviviricetes</taxon>
        <taxon>Herpesvirales</taxon>
        <taxon>Orthoherpesviridae</taxon>
        <taxon>Gammaherpesvirinae</taxon>
        <taxon>Percavirus</taxon>
        <taxon>Percavirus equidgamma2</taxon>
        <taxon>Equid gammaherpesvirus 2</taxon>
    </lineage>
</organism>